<sequence length="319" mass="35239">MQNRNTYEWAKKMTRLISVLVMIHIITRTSISNAYPIFAQQGYENPREATGRIVCANCHLAKKPVDIEVPQSVLPNTVFEAVVKIPYDMQMKQVLANGKKGALNVGAVLILPEGFELAPPDRISPEIRQKTGNLYFQNYRPNKKNIIVIGPVPGQKYSELVFPILSPDPSTDKEAHFLKYPIYVGGNRGRGQIYPDGSKSNNTVYSASATGRVSKILRKEKGGYEITIDNTSDGGQVVDIVPPGPELLISEGELIKVDQPLTNNPNLGGFGQGDAEIVLQDPLRVKGLLLFLASVILAQIFLVLKKKQFEKVQLAEMNL</sequence>
<proteinExistence type="inferred from homology"/>
<feature type="signal peptide" evidence="1">
    <location>
        <begin position="1"/>
        <end position="34"/>
    </location>
</feature>
<feature type="chain" id="PRO_0000023832" description="Cytochrome f">
    <location>
        <begin position="35"/>
        <end position="319"/>
    </location>
</feature>
<feature type="transmembrane region" description="Helical" evidence="2">
    <location>
        <begin position="287"/>
        <end position="304"/>
    </location>
</feature>
<feature type="binding site" description="axial binding residue" evidence="1">
    <location>
        <position position="35"/>
    </location>
    <ligand>
        <name>heme</name>
        <dbReference type="ChEBI" id="CHEBI:30413"/>
    </ligand>
    <ligandPart>
        <name>Fe</name>
        <dbReference type="ChEBI" id="CHEBI:18248"/>
    </ligandPart>
</feature>
<feature type="binding site" description="covalent" evidence="1">
    <location>
        <position position="55"/>
    </location>
    <ligand>
        <name>heme</name>
        <dbReference type="ChEBI" id="CHEBI:30413"/>
    </ligand>
</feature>
<feature type="binding site" description="covalent" evidence="1">
    <location>
        <position position="58"/>
    </location>
    <ligand>
        <name>heme</name>
        <dbReference type="ChEBI" id="CHEBI:30413"/>
    </ligand>
</feature>
<feature type="binding site" description="axial binding residue" evidence="1">
    <location>
        <position position="59"/>
    </location>
    <ligand>
        <name>heme</name>
        <dbReference type="ChEBI" id="CHEBI:30413"/>
    </ligand>
    <ligandPart>
        <name>Fe</name>
        <dbReference type="ChEBI" id="CHEBI:18248"/>
    </ligandPart>
</feature>
<geneLocation type="chloroplast"/>
<organism>
    <name type="scientific">Pinus thunbergii</name>
    <name type="common">Japanese black pine</name>
    <name type="synonym">Pinus thunbergiana</name>
    <dbReference type="NCBI Taxonomy" id="3350"/>
    <lineage>
        <taxon>Eukaryota</taxon>
        <taxon>Viridiplantae</taxon>
        <taxon>Streptophyta</taxon>
        <taxon>Embryophyta</taxon>
        <taxon>Tracheophyta</taxon>
        <taxon>Spermatophyta</taxon>
        <taxon>Pinopsida</taxon>
        <taxon>Pinidae</taxon>
        <taxon>Conifers I</taxon>
        <taxon>Pinales</taxon>
        <taxon>Pinaceae</taxon>
        <taxon>Pinus</taxon>
        <taxon>Pinus subgen. Pinus</taxon>
    </lineage>
</organism>
<gene>
    <name type="primary">petA</name>
</gene>
<keyword id="KW-0150">Chloroplast</keyword>
<keyword id="KW-0249">Electron transport</keyword>
<keyword id="KW-0349">Heme</keyword>
<keyword id="KW-0408">Iron</keyword>
<keyword id="KW-0472">Membrane</keyword>
<keyword id="KW-0479">Metal-binding</keyword>
<keyword id="KW-0602">Photosynthesis</keyword>
<keyword id="KW-0934">Plastid</keyword>
<keyword id="KW-0732">Signal</keyword>
<keyword id="KW-0793">Thylakoid</keyword>
<keyword id="KW-0812">Transmembrane</keyword>
<keyword id="KW-1133">Transmembrane helix</keyword>
<keyword id="KW-0813">Transport</keyword>
<name>CYF_PINTH</name>
<comment type="function">
    <text evidence="1">Component of the cytochrome b6-f complex, which mediates electron transfer between photosystem II (PSII) and photosystem I (PSI), cyclic electron flow around PSI, and state transitions.</text>
</comment>
<comment type="cofactor">
    <cofactor evidence="1">
        <name>heme</name>
        <dbReference type="ChEBI" id="CHEBI:30413"/>
    </cofactor>
    <text evidence="1">Binds 1 heme group covalently.</text>
</comment>
<comment type="subunit">
    <text evidence="1">The 4 large subunits of the cytochrome b6-f complex are cytochrome b6, subunit IV (17 kDa polypeptide, petD), cytochrome f and the Rieske protein, while the 4 small subunits are PetG, PetL, PetM and PetN. The complex functions as a dimer (By similarity).</text>
</comment>
<comment type="subcellular location">
    <subcellularLocation>
        <location evidence="1">Plastid</location>
        <location evidence="1">Chloroplast thylakoid membrane</location>
        <topology evidence="1">Single-pass membrane protein</topology>
    </subcellularLocation>
</comment>
<comment type="similarity">
    <text evidence="3">Belongs to the cytochrome f family.</text>
</comment>
<evidence type="ECO:0000250" key="1"/>
<evidence type="ECO:0000255" key="2"/>
<evidence type="ECO:0000305" key="3"/>
<dbReference type="EMBL" id="D17510">
    <property type="protein sequence ID" value="BAA04358.1"/>
    <property type="molecule type" value="Genomic_DNA"/>
</dbReference>
<dbReference type="PIR" id="T07480">
    <property type="entry name" value="T07480"/>
</dbReference>
<dbReference type="RefSeq" id="NP_042401.1">
    <property type="nucleotide sequence ID" value="NC_001631.1"/>
</dbReference>
<dbReference type="SMR" id="P41619"/>
<dbReference type="GeneID" id="808998"/>
<dbReference type="GO" id="GO:0009535">
    <property type="term" value="C:chloroplast thylakoid membrane"/>
    <property type="evidence" value="ECO:0007669"/>
    <property type="project" value="UniProtKB-SubCell"/>
</dbReference>
<dbReference type="GO" id="GO:0009055">
    <property type="term" value="F:electron transfer activity"/>
    <property type="evidence" value="ECO:0007669"/>
    <property type="project" value="UniProtKB-UniRule"/>
</dbReference>
<dbReference type="GO" id="GO:0020037">
    <property type="term" value="F:heme binding"/>
    <property type="evidence" value="ECO:0007669"/>
    <property type="project" value="InterPro"/>
</dbReference>
<dbReference type="GO" id="GO:0005506">
    <property type="term" value="F:iron ion binding"/>
    <property type="evidence" value="ECO:0007669"/>
    <property type="project" value="InterPro"/>
</dbReference>
<dbReference type="GO" id="GO:0015979">
    <property type="term" value="P:photosynthesis"/>
    <property type="evidence" value="ECO:0007669"/>
    <property type="project" value="UniProtKB-UniRule"/>
</dbReference>
<dbReference type="FunFam" id="1.20.5.700:FF:000001">
    <property type="entry name" value="Cytochrome f"/>
    <property type="match status" value="1"/>
</dbReference>
<dbReference type="FunFam" id="2.40.50.100:FF:000007">
    <property type="entry name" value="Cytochrome f"/>
    <property type="match status" value="1"/>
</dbReference>
<dbReference type="FunFam" id="2.60.40.830:FF:000001">
    <property type="entry name" value="Cytochrome f"/>
    <property type="match status" value="1"/>
</dbReference>
<dbReference type="Gene3D" id="2.40.50.100">
    <property type="match status" value="1"/>
</dbReference>
<dbReference type="Gene3D" id="2.60.40.830">
    <property type="entry name" value="Cytochrome f large domain"/>
    <property type="match status" value="1"/>
</dbReference>
<dbReference type="Gene3D" id="1.20.5.700">
    <property type="entry name" value="Single helix bin"/>
    <property type="match status" value="1"/>
</dbReference>
<dbReference type="HAMAP" id="MF_00610">
    <property type="entry name" value="Cytb6_f_cytF"/>
    <property type="match status" value="1"/>
</dbReference>
<dbReference type="InterPro" id="IPR024058">
    <property type="entry name" value="Cyt-f_TM"/>
</dbReference>
<dbReference type="InterPro" id="IPR002325">
    <property type="entry name" value="Cyt_f"/>
</dbReference>
<dbReference type="InterPro" id="IPR024094">
    <property type="entry name" value="Cyt_f_lg_dom"/>
</dbReference>
<dbReference type="InterPro" id="IPR036826">
    <property type="entry name" value="Cyt_f_lg_dom_sf"/>
</dbReference>
<dbReference type="InterPro" id="IPR011054">
    <property type="entry name" value="Rudment_hybrid_motif"/>
</dbReference>
<dbReference type="PANTHER" id="PTHR33288">
    <property type="match status" value="1"/>
</dbReference>
<dbReference type="PANTHER" id="PTHR33288:SF10">
    <property type="entry name" value="CYTOCHROME F"/>
    <property type="match status" value="1"/>
</dbReference>
<dbReference type="Pfam" id="PF01333">
    <property type="entry name" value="Apocytochr_F_C"/>
    <property type="match status" value="1"/>
</dbReference>
<dbReference type="Pfam" id="PF16639">
    <property type="entry name" value="Apocytochr_F_N"/>
    <property type="match status" value="1"/>
</dbReference>
<dbReference type="PRINTS" id="PR00610">
    <property type="entry name" value="CYTOCHROMEF"/>
</dbReference>
<dbReference type="SUPFAM" id="SSF103431">
    <property type="entry name" value="Cytochrome f subunit of the cytochrome b6f complex, transmembrane anchor"/>
    <property type="match status" value="1"/>
</dbReference>
<dbReference type="SUPFAM" id="SSF49441">
    <property type="entry name" value="Cytochrome f, large domain"/>
    <property type="match status" value="1"/>
</dbReference>
<dbReference type="SUPFAM" id="SSF51246">
    <property type="entry name" value="Rudiment single hybrid motif"/>
    <property type="match status" value="1"/>
</dbReference>
<dbReference type="PROSITE" id="PS51010">
    <property type="entry name" value="CYTF"/>
    <property type="match status" value="1"/>
</dbReference>
<accession>P41619</accession>
<reference key="1">
    <citation type="journal article" date="1994" name="Proc. Natl. Acad. Sci. U.S.A.">
        <title>Loss of all ndh genes as determined by sequencing the entire chloroplast genome of the black pine Pinus thunbergii.</title>
        <authorList>
            <person name="Wakasugi T."/>
            <person name="Tsudzuki J."/>
            <person name="Ito S."/>
            <person name="Nakashima K."/>
            <person name="Tsudzuki T."/>
            <person name="Sugiura M."/>
        </authorList>
    </citation>
    <scope>NUCLEOTIDE SEQUENCE [LARGE SCALE GENOMIC DNA]</scope>
</reference>
<protein>
    <recommendedName>
        <fullName>Cytochrome f</fullName>
    </recommendedName>
</protein>